<feature type="chain" id="PRO_0000238853" description="Cytochrome c-type biogenesis protein CcmE">
    <location>
        <begin position="1"/>
        <end position="167"/>
    </location>
</feature>
<feature type="topological domain" description="Cytoplasmic" evidence="1">
    <location>
        <begin position="1"/>
        <end position="7"/>
    </location>
</feature>
<feature type="transmembrane region" description="Helical; Signal-anchor for type II membrane protein" evidence="1">
    <location>
        <begin position="8"/>
        <end position="28"/>
    </location>
</feature>
<feature type="topological domain" description="Periplasmic" evidence="1">
    <location>
        <begin position="29"/>
        <end position="167"/>
    </location>
</feature>
<feature type="region of interest" description="Disordered" evidence="2">
    <location>
        <begin position="137"/>
        <end position="167"/>
    </location>
</feature>
<feature type="compositionally biased region" description="Basic and acidic residues" evidence="2">
    <location>
        <begin position="137"/>
        <end position="150"/>
    </location>
</feature>
<feature type="compositionally biased region" description="Polar residues" evidence="2">
    <location>
        <begin position="151"/>
        <end position="161"/>
    </location>
</feature>
<feature type="binding site" description="covalent" evidence="1">
    <location>
        <position position="122"/>
    </location>
    <ligand>
        <name>heme</name>
        <dbReference type="ChEBI" id="CHEBI:30413"/>
    </ligand>
</feature>
<feature type="binding site" description="axial binding residue" evidence="1">
    <location>
        <position position="126"/>
    </location>
    <ligand>
        <name>heme</name>
        <dbReference type="ChEBI" id="CHEBI:30413"/>
    </ligand>
    <ligandPart>
        <name>Fe</name>
        <dbReference type="ChEBI" id="CHEBI:18248"/>
    </ligandPart>
</feature>
<name>CCME_RHOPA</name>
<organism>
    <name type="scientific">Rhodopseudomonas palustris (strain ATCC BAA-98 / CGA009)</name>
    <dbReference type="NCBI Taxonomy" id="258594"/>
    <lineage>
        <taxon>Bacteria</taxon>
        <taxon>Pseudomonadati</taxon>
        <taxon>Pseudomonadota</taxon>
        <taxon>Alphaproteobacteria</taxon>
        <taxon>Hyphomicrobiales</taxon>
        <taxon>Nitrobacteraceae</taxon>
        <taxon>Rhodopseudomonas</taxon>
    </lineage>
</organism>
<protein>
    <recommendedName>
        <fullName evidence="1">Cytochrome c-type biogenesis protein CcmE</fullName>
    </recommendedName>
    <alternativeName>
        <fullName evidence="1">Cytochrome c maturation protein E</fullName>
    </alternativeName>
    <alternativeName>
        <fullName evidence="1">Heme chaperone CcmE</fullName>
    </alternativeName>
</protein>
<reference key="1">
    <citation type="journal article" date="2004" name="Nat. Biotechnol.">
        <title>Complete genome sequence of the metabolically versatile photosynthetic bacterium Rhodopseudomonas palustris.</title>
        <authorList>
            <person name="Larimer F.W."/>
            <person name="Chain P."/>
            <person name="Hauser L."/>
            <person name="Lamerdin J.E."/>
            <person name="Malfatti S."/>
            <person name="Do L."/>
            <person name="Land M.L."/>
            <person name="Pelletier D.A."/>
            <person name="Beatty J.T."/>
            <person name="Lang A.S."/>
            <person name="Tabita F.R."/>
            <person name="Gibson J.L."/>
            <person name="Hanson T.E."/>
            <person name="Bobst C."/>
            <person name="Torres y Torres J.L."/>
            <person name="Peres C."/>
            <person name="Harrison F.H."/>
            <person name="Gibson J."/>
            <person name="Harwood C.S."/>
        </authorList>
    </citation>
    <scope>NUCLEOTIDE SEQUENCE [LARGE SCALE GENOMIC DNA]</scope>
    <source>
        <strain>ATCC BAA-98 / CGA009</strain>
    </source>
</reference>
<keyword id="KW-0997">Cell inner membrane</keyword>
<keyword id="KW-1003">Cell membrane</keyword>
<keyword id="KW-0201">Cytochrome c-type biogenesis</keyword>
<keyword id="KW-0349">Heme</keyword>
<keyword id="KW-0408">Iron</keyword>
<keyword id="KW-0472">Membrane</keyword>
<keyword id="KW-0479">Metal-binding</keyword>
<keyword id="KW-0735">Signal-anchor</keyword>
<keyword id="KW-0812">Transmembrane</keyword>
<keyword id="KW-1133">Transmembrane helix</keyword>
<dbReference type="EMBL" id="BX572599">
    <property type="protein sequence ID" value="CAE27361.1"/>
    <property type="molecule type" value="Genomic_DNA"/>
</dbReference>
<dbReference type="RefSeq" id="WP_011157425.1">
    <property type="nucleotide sequence ID" value="NZ_CP116810.1"/>
</dbReference>
<dbReference type="SMR" id="Q6N8I3"/>
<dbReference type="STRING" id="258594.RPA1920"/>
<dbReference type="GeneID" id="66892963"/>
<dbReference type="eggNOG" id="COG2332">
    <property type="taxonomic scope" value="Bacteria"/>
</dbReference>
<dbReference type="HOGENOM" id="CLU_079503_1_1_5"/>
<dbReference type="PhylomeDB" id="Q6N8I3"/>
<dbReference type="GO" id="GO:0005886">
    <property type="term" value="C:plasma membrane"/>
    <property type="evidence" value="ECO:0007669"/>
    <property type="project" value="UniProtKB-SubCell"/>
</dbReference>
<dbReference type="GO" id="GO:0020037">
    <property type="term" value="F:heme binding"/>
    <property type="evidence" value="ECO:0007669"/>
    <property type="project" value="InterPro"/>
</dbReference>
<dbReference type="GO" id="GO:0046872">
    <property type="term" value="F:metal ion binding"/>
    <property type="evidence" value="ECO:0007669"/>
    <property type="project" value="UniProtKB-KW"/>
</dbReference>
<dbReference type="GO" id="GO:0017004">
    <property type="term" value="P:cytochrome complex assembly"/>
    <property type="evidence" value="ECO:0007669"/>
    <property type="project" value="UniProtKB-KW"/>
</dbReference>
<dbReference type="FunFam" id="2.40.50.140:FF:000104">
    <property type="entry name" value="Cytochrome c-type biogenesis protein CcmE"/>
    <property type="match status" value="1"/>
</dbReference>
<dbReference type="Gene3D" id="2.40.50.140">
    <property type="entry name" value="Nucleic acid-binding proteins"/>
    <property type="match status" value="1"/>
</dbReference>
<dbReference type="HAMAP" id="MF_01959">
    <property type="entry name" value="CcmE"/>
    <property type="match status" value="1"/>
</dbReference>
<dbReference type="InterPro" id="IPR004329">
    <property type="entry name" value="CcmE"/>
</dbReference>
<dbReference type="InterPro" id="IPR036127">
    <property type="entry name" value="CcmE-like_sf"/>
</dbReference>
<dbReference type="InterPro" id="IPR012340">
    <property type="entry name" value="NA-bd_OB-fold"/>
</dbReference>
<dbReference type="NCBIfam" id="NF009727">
    <property type="entry name" value="PRK13254.1-1"/>
    <property type="match status" value="1"/>
</dbReference>
<dbReference type="NCBIfam" id="NF009729">
    <property type="entry name" value="PRK13254.1-3"/>
    <property type="match status" value="1"/>
</dbReference>
<dbReference type="NCBIfam" id="NF009731">
    <property type="entry name" value="PRK13254.1-5"/>
    <property type="match status" value="1"/>
</dbReference>
<dbReference type="PANTHER" id="PTHR34128">
    <property type="entry name" value="CYTOCHROME C-TYPE BIOGENESIS PROTEIN CCME HOMOLOG, MITOCHONDRIAL"/>
    <property type="match status" value="1"/>
</dbReference>
<dbReference type="PANTHER" id="PTHR34128:SF2">
    <property type="entry name" value="CYTOCHROME C-TYPE BIOGENESIS PROTEIN CCME HOMOLOG, MITOCHONDRIAL"/>
    <property type="match status" value="1"/>
</dbReference>
<dbReference type="Pfam" id="PF03100">
    <property type="entry name" value="CcmE"/>
    <property type="match status" value="1"/>
</dbReference>
<dbReference type="SUPFAM" id="SSF82093">
    <property type="entry name" value="Heme chaperone CcmE"/>
    <property type="match status" value="1"/>
</dbReference>
<comment type="function">
    <text evidence="1">Heme chaperone required for the biogenesis of c-type cytochromes. Transiently binds heme delivered by CcmC and transfers the heme to apo-cytochromes in a process facilitated by CcmF and CcmH.</text>
</comment>
<comment type="subcellular location">
    <subcellularLocation>
        <location evidence="1">Cell inner membrane</location>
        <topology evidence="1">Single-pass type II membrane protein</topology>
        <orientation evidence="1">Periplasmic side</orientation>
    </subcellularLocation>
</comment>
<comment type="similarity">
    <text evidence="1">Belongs to the CcmE/CycJ family.</text>
</comment>
<sequence length="167" mass="17836">MTRKQRRLLMIGGAGVVLIVAVGLVLNALRDSIVFFSTPKMVAEQHIEAGKRFRLGGVVEPGSLQRGEQLRVSFKVTDGAASLPVAYKGILPDLFREGQGVIAEGSLDKAGVFEADTVLAKHDEKYMPKEVADALKKDGHWKDDYGKKSPGETTAGQTSANAAEGGK</sequence>
<evidence type="ECO:0000255" key="1">
    <source>
        <dbReference type="HAMAP-Rule" id="MF_01959"/>
    </source>
</evidence>
<evidence type="ECO:0000256" key="2">
    <source>
        <dbReference type="SAM" id="MobiDB-lite"/>
    </source>
</evidence>
<proteinExistence type="inferred from homology"/>
<accession>Q6N8I3</accession>
<gene>
    <name evidence="1" type="primary">ccmE</name>
    <name evidence="1" type="synonym">cycJ</name>
    <name type="ordered locus">RPA1920</name>
</gene>